<dbReference type="EMBL" id="CP000568">
    <property type="protein sequence ID" value="ABN51641.1"/>
    <property type="molecule type" value="Genomic_DNA"/>
</dbReference>
<dbReference type="SMR" id="A3DCG2"/>
<dbReference type="STRING" id="203119.Cthe_0403"/>
<dbReference type="KEGG" id="cth:Cthe_0403"/>
<dbReference type="eggNOG" id="COG1191">
    <property type="taxonomic scope" value="Bacteria"/>
</dbReference>
<dbReference type="HOGENOM" id="CLU_082361_0_0_9"/>
<dbReference type="Proteomes" id="UP000002145">
    <property type="component" value="Chromosome"/>
</dbReference>
<dbReference type="GO" id="GO:0005737">
    <property type="term" value="C:cytoplasm"/>
    <property type="evidence" value="ECO:0007669"/>
    <property type="project" value="UniProtKB-SubCell"/>
</dbReference>
<dbReference type="GO" id="GO:0003677">
    <property type="term" value="F:DNA binding"/>
    <property type="evidence" value="ECO:0007669"/>
    <property type="project" value="UniProtKB-UniRule"/>
</dbReference>
<dbReference type="GO" id="GO:0016987">
    <property type="term" value="F:sigma factor activity"/>
    <property type="evidence" value="ECO:0007669"/>
    <property type="project" value="UniProtKB-UniRule"/>
</dbReference>
<dbReference type="GO" id="GO:0006352">
    <property type="term" value="P:DNA-templated transcription initiation"/>
    <property type="evidence" value="ECO:0007669"/>
    <property type="project" value="UniProtKB-UniRule"/>
</dbReference>
<dbReference type="Gene3D" id="1.10.1740.10">
    <property type="match status" value="1"/>
</dbReference>
<dbReference type="HAMAP" id="MF_02064">
    <property type="entry name" value="Sigma70_SigI"/>
    <property type="match status" value="1"/>
</dbReference>
<dbReference type="InterPro" id="IPR014284">
    <property type="entry name" value="RNA_pol_sigma-70_dom"/>
</dbReference>
<dbReference type="InterPro" id="IPR014244">
    <property type="entry name" value="RNA_pol_sigma-I"/>
</dbReference>
<dbReference type="InterPro" id="IPR007627">
    <property type="entry name" value="RNA_pol_sigma70_r2"/>
</dbReference>
<dbReference type="InterPro" id="IPR013325">
    <property type="entry name" value="RNA_pol_sigma_r2"/>
</dbReference>
<dbReference type="NCBIfam" id="NF006173">
    <property type="entry name" value="PRK08311.2-1"/>
    <property type="match status" value="1"/>
</dbReference>
<dbReference type="NCBIfam" id="TIGR02937">
    <property type="entry name" value="sigma70-ECF"/>
    <property type="match status" value="1"/>
</dbReference>
<dbReference type="NCBIfam" id="TIGR02895">
    <property type="entry name" value="spore_sigI"/>
    <property type="match status" value="1"/>
</dbReference>
<dbReference type="Pfam" id="PF04542">
    <property type="entry name" value="Sigma70_r2"/>
    <property type="match status" value="1"/>
</dbReference>
<dbReference type="PIRSF" id="PIRSF038953">
    <property type="entry name" value="SigI"/>
    <property type="match status" value="1"/>
</dbReference>
<dbReference type="SUPFAM" id="SSF88946">
    <property type="entry name" value="Sigma2 domain of RNA polymerase sigma factors"/>
    <property type="match status" value="1"/>
</dbReference>
<accession>A3DCG2</accession>
<gene>
    <name evidence="5" type="primary">sigI4</name>
    <name evidence="8" type="ordered locus">Cthe_0403</name>
</gene>
<feature type="chain" id="PRO_0000436518" description="RNA polymerase sigma factor SigI4">
    <location>
        <begin position="1"/>
        <end position="274"/>
    </location>
</feature>
<feature type="DNA-binding region" description="H-T-H motif" evidence="2">
    <location>
        <begin position="226"/>
        <end position="245"/>
    </location>
</feature>
<feature type="short sequence motif" description="Polymerase core binding" evidence="2">
    <location>
        <begin position="87"/>
        <end position="100"/>
    </location>
</feature>
<name>SIGI4_ACET2</name>
<comment type="function">
    <text evidence="2 7">Sigma factors are initiation factors that promote the attachment of RNA polymerase to specific initiation sites and are then released (By similarity). This sigma factor is involved in regulation of cellulosomal genes via an external polysaccharide-sensing mechanism (Probable).</text>
</comment>
<comment type="activity regulation">
    <text evidence="1 2">Negatively regulated by the anti-sigma-I factor RsgI4 (By similarity). Binding of the polysaccharide substrate to RsgI4 may lead to the release and activation of SigI4 (By similarity).</text>
</comment>
<comment type="subunit">
    <text evidence="2">Interacts with RsgI4.</text>
</comment>
<comment type="subcellular location">
    <subcellularLocation>
        <location evidence="2">Cytoplasm</location>
    </subcellularLocation>
</comment>
<comment type="induction">
    <text evidence="3 4">Up-regulated in the presence of cellulose and further up-regulated in the presence of both cellulose and xylan (PubMed:20937888). Up-regulated in pretreated yellow poplar (PYP)-grown cells (PubMed:24782837).</text>
</comment>
<comment type="similarity">
    <text evidence="2">Belongs to the sigma-70 factor family. SigI subfamily.</text>
</comment>
<keyword id="KW-0963">Cytoplasm</keyword>
<keyword id="KW-0238">DNA-binding</keyword>
<keyword id="KW-1185">Reference proteome</keyword>
<keyword id="KW-0731">Sigma factor</keyword>
<keyword id="KW-0804">Transcription</keyword>
<keyword id="KW-0805">Transcription regulation</keyword>
<organism>
    <name type="scientific">Acetivibrio thermocellus (strain ATCC 27405 / DSM 1237 / JCM 9322 / NBRC 103400 / NCIMB 10682 / NRRL B-4536 / VPI 7372)</name>
    <name type="common">Clostridium thermocellum</name>
    <dbReference type="NCBI Taxonomy" id="203119"/>
    <lineage>
        <taxon>Bacteria</taxon>
        <taxon>Bacillati</taxon>
        <taxon>Bacillota</taxon>
        <taxon>Clostridia</taxon>
        <taxon>Eubacteriales</taxon>
        <taxon>Oscillospiraceae</taxon>
        <taxon>Acetivibrio</taxon>
    </lineage>
</organism>
<proteinExistence type="evidence at transcript level"/>
<protein>
    <recommendedName>
        <fullName evidence="6">RNA polymerase sigma factor SigI4</fullName>
    </recommendedName>
</protein>
<sequence length="274" mass="32452">MLNVQLKIFCHAALIFLEVVYLFEPNLIYGVKKREKKSRSDSINHIIIKIKNGDIELKEKFIKKYKPYLLKIISSTLGRYVDPEVSEEYSVGLMAFNEAIDGFNPEINGNFTNYCNMVVNHRIIDYIRKNKKYSNVIPFSYFEERNDFEEKYLVSDSHYLYENIEVKEEILQFEQQLKQFGITLEDLVMNSPKHKDSRELCISIARILSENDKLFEKMIRKKCIPLSELMGLVNVHRKTVERNRKFIIAVSLILRSGLDEIKQFFRASEERREK</sequence>
<reference key="1">
    <citation type="submission" date="2007-02" db="EMBL/GenBank/DDBJ databases">
        <title>Complete sequence of Clostridium thermocellum ATCC 27405.</title>
        <authorList>
            <consortium name="US DOE Joint Genome Institute"/>
            <person name="Copeland A."/>
            <person name="Lucas S."/>
            <person name="Lapidus A."/>
            <person name="Barry K."/>
            <person name="Detter J.C."/>
            <person name="Glavina del Rio T."/>
            <person name="Hammon N."/>
            <person name="Israni S."/>
            <person name="Dalin E."/>
            <person name="Tice H."/>
            <person name="Pitluck S."/>
            <person name="Chertkov O."/>
            <person name="Brettin T."/>
            <person name="Bruce D."/>
            <person name="Han C."/>
            <person name="Tapia R."/>
            <person name="Gilna P."/>
            <person name="Schmutz J."/>
            <person name="Larimer F."/>
            <person name="Land M."/>
            <person name="Hauser L."/>
            <person name="Kyrpides N."/>
            <person name="Mikhailova N."/>
            <person name="Wu J.H.D."/>
            <person name="Newcomb M."/>
            <person name="Richardson P."/>
        </authorList>
    </citation>
    <scope>NUCLEOTIDE SEQUENCE [LARGE SCALE GENOMIC DNA]</scope>
    <source>
        <strain>ATCC 27405 / DSM 1237 / JCM 9322 / NBRC 103400 / NCIMB 10682 / NRRL B-4536 / VPI 7372</strain>
    </source>
</reference>
<reference key="2">
    <citation type="journal article" date="2010" name="FEMS Microbiol. Lett.">
        <title>The unique set of putative membrane-associated anti-sigma factors in Clostridium thermocellum suggests a novel extracellular carbohydrate-sensing mechanism involved in gene regulation.</title>
        <authorList>
            <person name="Kahel-Raifer H."/>
            <person name="Jindou S."/>
            <person name="Bahari L."/>
            <person name="Nataf Y."/>
            <person name="Shoham Y."/>
            <person name="Bayer E.A."/>
            <person name="Borovok I."/>
            <person name="Lamed R."/>
        </authorList>
    </citation>
    <scope>NOMENCLATURE</scope>
    <source>
        <strain>ATCC 27405 / DSM 1237 / JCM 9322 / NBRC 103400 / NCIMB 10682 / NRRL B-4536 / VPI 7372</strain>
    </source>
</reference>
<reference key="3">
    <citation type="journal article" date="2010" name="Proc. Natl. Acad. Sci. U.S.A.">
        <title>Clostridium thermocellum cellulosomal genes are regulated by extracytoplasmic polysaccharides via alternative sigma factors.</title>
        <authorList>
            <person name="Nataf Y."/>
            <person name="Bahari L."/>
            <person name="Kahel-Raifer H."/>
            <person name="Borovok I."/>
            <person name="Lamed R."/>
            <person name="Bayer E.A."/>
            <person name="Sonenshein A.L."/>
            <person name="Shoham Y."/>
        </authorList>
    </citation>
    <scope>FUNCTION</scope>
    <scope>INDUCTION</scope>
</reference>
<reference key="4">
    <citation type="journal article" date="2014" name="Front. Microbiol.">
        <title>Comparison of transcriptional profiles of Clostridium thermocellum grown on cellobiose and pretreated yellow poplar using RNA-Seq.</title>
        <authorList>
            <person name="Wei H."/>
            <person name="Fu Y."/>
            <person name="Magnusson L."/>
            <person name="Baker J.O."/>
            <person name="Maness P.C."/>
            <person name="Xu Q."/>
            <person name="Yang S."/>
            <person name="Bowersox A."/>
            <person name="Bogorad I."/>
            <person name="Wang W."/>
            <person name="Tucker M.P."/>
            <person name="Himmel M.E."/>
            <person name="Ding S.Y."/>
        </authorList>
    </citation>
    <scope>INDUCTION</scope>
    <source>
        <strain>ATCC 27405 / DSM 1237 / JCM 9322 / NBRC 103400 / NCIMB 10682 / NRRL B-4536 / VPI 7372</strain>
    </source>
</reference>
<evidence type="ECO:0000250" key="1">
    <source>
        <dbReference type="UniProtKB" id="A3DBH0"/>
    </source>
</evidence>
<evidence type="ECO:0000255" key="2">
    <source>
        <dbReference type="HAMAP-Rule" id="MF_02064"/>
    </source>
</evidence>
<evidence type="ECO:0000269" key="3">
    <source>
    </source>
</evidence>
<evidence type="ECO:0000269" key="4">
    <source>
    </source>
</evidence>
<evidence type="ECO:0000303" key="5">
    <source>
    </source>
</evidence>
<evidence type="ECO:0000305" key="6"/>
<evidence type="ECO:0000305" key="7">
    <source>
    </source>
</evidence>
<evidence type="ECO:0000312" key="8">
    <source>
        <dbReference type="EMBL" id="ABN51641.1"/>
    </source>
</evidence>